<name>DCUP_XANE5</name>
<proteinExistence type="inferred from homology"/>
<comment type="function">
    <text evidence="1">Catalyzes the decarboxylation of four acetate groups of uroporphyrinogen-III to yield coproporphyrinogen-III.</text>
</comment>
<comment type="catalytic activity">
    <reaction evidence="1">
        <text>uroporphyrinogen III + 4 H(+) = coproporphyrinogen III + 4 CO2</text>
        <dbReference type="Rhea" id="RHEA:19865"/>
        <dbReference type="ChEBI" id="CHEBI:15378"/>
        <dbReference type="ChEBI" id="CHEBI:16526"/>
        <dbReference type="ChEBI" id="CHEBI:57308"/>
        <dbReference type="ChEBI" id="CHEBI:57309"/>
        <dbReference type="EC" id="4.1.1.37"/>
    </reaction>
</comment>
<comment type="pathway">
    <text evidence="1">Porphyrin-containing compound metabolism; protoporphyrin-IX biosynthesis; coproporphyrinogen-III from 5-aminolevulinate: step 4/4.</text>
</comment>
<comment type="subunit">
    <text evidence="1">Homodimer.</text>
</comment>
<comment type="subcellular location">
    <subcellularLocation>
        <location evidence="1">Cytoplasm</location>
    </subcellularLocation>
</comment>
<comment type="similarity">
    <text evidence="1">Belongs to the uroporphyrinogen decarboxylase family.</text>
</comment>
<keyword id="KW-0963">Cytoplasm</keyword>
<keyword id="KW-0210">Decarboxylase</keyword>
<keyword id="KW-0456">Lyase</keyword>
<keyword id="KW-0627">Porphyrin biosynthesis</keyword>
<gene>
    <name evidence="1" type="primary">hemE</name>
    <name type="ordered locus">XCV3163</name>
</gene>
<evidence type="ECO:0000255" key="1">
    <source>
        <dbReference type="HAMAP-Rule" id="MF_00218"/>
    </source>
</evidence>
<feature type="chain" id="PRO_1000023998" description="Uroporphyrinogen decarboxylase">
    <location>
        <begin position="1"/>
        <end position="354"/>
    </location>
</feature>
<feature type="binding site" evidence="1">
    <location>
        <begin position="25"/>
        <end position="29"/>
    </location>
    <ligand>
        <name>substrate</name>
    </ligand>
</feature>
<feature type="binding site" evidence="1">
    <location>
        <position position="75"/>
    </location>
    <ligand>
        <name>substrate</name>
    </ligand>
</feature>
<feature type="binding site" evidence="1">
    <location>
        <position position="152"/>
    </location>
    <ligand>
        <name>substrate</name>
    </ligand>
</feature>
<feature type="binding site" evidence="1">
    <location>
        <position position="207"/>
    </location>
    <ligand>
        <name>substrate</name>
    </ligand>
</feature>
<feature type="binding site" evidence="1">
    <location>
        <position position="330"/>
    </location>
    <ligand>
        <name>substrate</name>
    </ligand>
</feature>
<feature type="site" description="Transition state stabilizer" evidence="1">
    <location>
        <position position="75"/>
    </location>
</feature>
<sequence length="354" mass="38391">MLKNDRLLRALNRQPVDRTPVWLMRQAGRYLPEYRATRARAGSFLGMAKNPDIACEVTLQPLQRFPLDAAILFSDILTIPDAMGLELYFVEGEGPKFRHPVRDAAAIHRLGVPDMETELRYVMDAVRVIRRELDGSVPLIGFSGSPWTLACYMIEGGGSKEYARIKAMAFNAPELLHHLLGTVTDAVIAYLAAQRAAGAQALQVFDTWGGVLSPAMYREFSLPYLTRIARELERGTGAERTPLVLFGKGNGAYVADLAASGAEAVGVDWTISLADAAQRAGGRVALQGNLDPATLYGSPDAIRSEVAKTLDSYAQGNGGSREGHVFNLGHGMSPDMNPEHVGVLVEAVQSLSKR</sequence>
<organism>
    <name type="scientific">Xanthomonas euvesicatoria pv. vesicatoria (strain 85-10)</name>
    <name type="common">Xanthomonas campestris pv. vesicatoria</name>
    <dbReference type="NCBI Taxonomy" id="316273"/>
    <lineage>
        <taxon>Bacteria</taxon>
        <taxon>Pseudomonadati</taxon>
        <taxon>Pseudomonadota</taxon>
        <taxon>Gammaproteobacteria</taxon>
        <taxon>Lysobacterales</taxon>
        <taxon>Lysobacteraceae</taxon>
        <taxon>Xanthomonas</taxon>
    </lineage>
</organism>
<protein>
    <recommendedName>
        <fullName evidence="1">Uroporphyrinogen decarboxylase</fullName>
        <shortName evidence="1">UPD</shortName>
        <shortName evidence="1">URO-D</shortName>
        <ecNumber evidence="1">4.1.1.37</ecNumber>
    </recommendedName>
</protein>
<accession>Q3BQR9</accession>
<dbReference type="EC" id="4.1.1.37" evidence="1"/>
<dbReference type="EMBL" id="AM039952">
    <property type="protein sequence ID" value="CAJ24894.1"/>
    <property type="molecule type" value="Genomic_DNA"/>
</dbReference>
<dbReference type="RefSeq" id="WP_011348185.1">
    <property type="nucleotide sequence ID" value="NZ_CP017190.1"/>
</dbReference>
<dbReference type="SMR" id="Q3BQR9"/>
<dbReference type="STRING" id="456327.BJD11_06995"/>
<dbReference type="KEGG" id="xcv:XCV3163"/>
<dbReference type="eggNOG" id="COG0407">
    <property type="taxonomic scope" value="Bacteria"/>
</dbReference>
<dbReference type="HOGENOM" id="CLU_040933_0_0_6"/>
<dbReference type="UniPathway" id="UPA00251">
    <property type="reaction ID" value="UER00321"/>
</dbReference>
<dbReference type="Proteomes" id="UP000007069">
    <property type="component" value="Chromosome"/>
</dbReference>
<dbReference type="GO" id="GO:0005829">
    <property type="term" value="C:cytosol"/>
    <property type="evidence" value="ECO:0007669"/>
    <property type="project" value="TreeGrafter"/>
</dbReference>
<dbReference type="GO" id="GO:0004853">
    <property type="term" value="F:uroporphyrinogen decarboxylase activity"/>
    <property type="evidence" value="ECO:0007669"/>
    <property type="project" value="UniProtKB-UniRule"/>
</dbReference>
<dbReference type="GO" id="GO:0019353">
    <property type="term" value="P:protoporphyrinogen IX biosynthetic process from glutamate"/>
    <property type="evidence" value="ECO:0007669"/>
    <property type="project" value="TreeGrafter"/>
</dbReference>
<dbReference type="CDD" id="cd00717">
    <property type="entry name" value="URO-D"/>
    <property type="match status" value="1"/>
</dbReference>
<dbReference type="FunFam" id="3.20.20.210:FF:000001">
    <property type="entry name" value="Uroporphyrinogen decarboxylase"/>
    <property type="match status" value="1"/>
</dbReference>
<dbReference type="Gene3D" id="3.20.20.210">
    <property type="match status" value="1"/>
</dbReference>
<dbReference type="HAMAP" id="MF_00218">
    <property type="entry name" value="URO_D"/>
    <property type="match status" value="1"/>
</dbReference>
<dbReference type="InterPro" id="IPR038071">
    <property type="entry name" value="UROD/MetE-like_sf"/>
</dbReference>
<dbReference type="InterPro" id="IPR006361">
    <property type="entry name" value="Uroporphyrinogen_deCO2ase_HemE"/>
</dbReference>
<dbReference type="InterPro" id="IPR000257">
    <property type="entry name" value="Uroporphyrinogen_deCOase"/>
</dbReference>
<dbReference type="NCBIfam" id="TIGR01464">
    <property type="entry name" value="hemE"/>
    <property type="match status" value="1"/>
</dbReference>
<dbReference type="PANTHER" id="PTHR21091">
    <property type="entry name" value="METHYLTETRAHYDROFOLATE:HOMOCYSTEINE METHYLTRANSFERASE RELATED"/>
    <property type="match status" value="1"/>
</dbReference>
<dbReference type="PANTHER" id="PTHR21091:SF169">
    <property type="entry name" value="UROPORPHYRINOGEN DECARBOXYLASE"/>
    <property type="match status" value="1"/>
</dbReference>
<dbReference type="Pfam" id="PF01208">
    <property type="entry name" value="URO-D"/>
    <property type="match status" value="1"/>
</dbReference>
<dbReference type="SUPFAM" id="SSF51726">
    <property type="entry name" value="UROD/MetE-like"/>
    <property type="match status" value="1"/>
</dbReference>
<dbReference type="PROSITE" id="PS00906">
    <property type="entry name" value="UROD_1"/>
    <property type="match status" value="1"/>
</dbReference>
<dbReference type="PROSITE" id="PS00907">
    <property type="entry name" value="UROD_2"/>
    <property type="match status" value="1"/>
</dbReference>
<reference key="1">
    <citation type="journal article" date="2005" name="J. Bacteriol.">
        <title>Insights into genome plasticity and pathogenicity of the plant pathogenic Bacterium Xanthomonas campestris pv. vesicatoria revealed by the complete genome sequence.</title>
        <authorList>
            <person name="Thieme F."/>
            <person name="Koebnik R."/>
            <person name="Bekel T."/>
            <person name="Berger C."/>
            <person name="Boch J."/>
            <person name="Buettner D."/>
            <person name="Caldana C."/>
            <person name="Gaigalat L."/>
            <person name="Goesmann A."/>
            <person name="Kay S."/>
            <person name="Kirchner O."/>
            <person name="Lanz C."/>
            <person name="Linke B."/>
            <person name="McHardy A.C."/>
            <person name="Meyer F."/>
            <person name="Mittenhuber G."/>
            <person name="Nies D.H."/>
            <person name="Niesbach-Kloesgen U."/>
            <person name="Patschkowski T."/>
            <person name="Rueckert C."/>
            <person name="Rupp O."/>
            <person name="Schneiker S."/>
            <person name="Schuster S.C."/>
            <person name="Vorhoelter F.J."/>
            <person name="Weber E."/>
            <person name="Puehler A."/>
            <person name="Bonas U."/>
            <person name="Bartels D."/>
            <person name="Kaiser O."/>
        </authorList>
    </citation>
    <scope>NUCLEOTIDE SEQUENCE [LARGE SCALE GENOMIC DNA]</scope>
    <source>
        <strain>85-10</strain>
    </source>
</reference>